<sequence>MSILVKNNIHWVGQRDWEVRDFHGTEYKTLRGSSYNSYLIREGKNVLIDTVDHKFSREFVQNLRSEIDLDAIDYIIINHAEEDHAGALTELMSYIPNTPIYCTTNAIDSINGHHHHPEWNFHTVKTGDSLDIGNGKQLIFVETPMLHWPDSMMTYMTGDAVLFSNDAFGQHYCDERLFNDEVDQTELFEQCQRYYANILTPFSRLVTPKITEILGFNLPVDMIATSHGVVWRENPTQIVELYLKWAADYQEDRITLFYDTMSNNTRMMADAIAQGINEVDPNVAVKIFNVARSDKNEILTNVFRSKGVLVGTSTMNNVMMPKIAGLVEEMTGLRFRNKRASAFGSHGWSGGAVDRLSTRLQDAGFEMSMSLKAKWRPDVDALEICRQHGREIARQWALAPLPEASVKPTQQQENCACAAAATADLGPCMQCSVCQWVYDPALGEPLQDVAPGTPWSDVPDNFLCPECSLGKDVFDVLATEAK</sequence>
<dbReference type="EMBL" id="CP000653">
    <property type="protein sequence ID" value="ABP61846.1"/>
    <property type="molecule type" value="Genomic_DNA"/>
</dbReference>
<dbReference type="RefSeq" id="WP_015960175.1">
    <property type="nucleotide sequence ID" value="NC_009436.1"/>
</dbReference>
<dbReference type="SMR" id="A4WDR6"/>
<dbReference type="STRING" id="399742.Ent638_3182"/>
<dbReference type="KEGG" id="ent:Ent638_3182"/>
<dbReference type="eggNOG" id="COG0426">
    <property type="taxonomic scope" value="Bacteria"/>
</dbReference>
<dbReference type="eggNOG" id="COG1773">
    <property type="taxonomic scope" value="Bacteria"/>
</dbReference>
<dbReference type="HOGENOM" id="CLU_017490_0_1_6"/>
<dbReference type="OrthoDB" id="9800607at2"/>
<dbReference type="UniPathway" id="UPA00638"/>
<dbReference type="Proteomes" id="UP000000230">
    <property type="component" value="Chromosome"/>
</dbReference>
<dbReference type="GO" id="GO:0005737">
    <property type="term" value="C:cytoplasm"/>
    <property type="evidence" value="ECO:0007669"/>
    <property type="project" value="UniProtKB-SubCell"/>
</dbReference>
<dbReference type="GO" id="GO:0009055">
    <property type="term" value="F:electron transfer activity"/>
    <property type="evidence" value="ECO:0007669"/>
    <property type="project" value="UniProtKB-UniRule"/>
</dbReference>
<dbReference type="GO" id="GO:0010181">
    <property type="term" value="F:FMN binding"/>
    <property type="evidence" value="ECO:0007669"/>
    <property type="project" value="InterPro"/>
</dbReference>
<dbReference type="GO" id="GO:0005506">
    <property type="term" value="F:iron ion binding"/>
    <property type="evidence" value="ECO:0007669"/>
    <property type="project" value="InterPro"/>
</dbReference>
<dbReference type="GO" id="GO:0016966">
    <property type="term" value="F:nitric oxide reductase activity"/>
    <property type="evidence" value="ECO:0007669"/>
    <property type="project" value="InterPro"/>
</dbReference>
<dbReference type="CDD" id="cd07709">
    <property type="entry name" value="flavodiiron_proteins_MBL-fold"/>
    <property type="match status" value="1"/>
</dbReference>
<dbReference type="CDD" id="cd00730">
    <property type="entry name" value="rubredoxin"/>
    <property type="match status" value="1"/>
</dbReference>
<dbReference type="FunFam" id="3.40.50.360:FF:000012">
    <property type="entry name" value="Anaerobic nitric oxide reductase flavorubredoxin"/>
    <property type="match status" value="1"/>
</dbReference>
<dbReference type="FunFam" id="3.60.15.10:FF:000009">
    <property type="entry name" value="Anaerobic nitric oxide reductase flavorubredoxin"/>
    <property type="match status" value="1"/>
</dbReference>
<dbReference type="Gene3D" id="2.20.28.10">
    <property type="match status" value="1"/>
</dbReference>
<dbReference type="Gene3D" id="3.40.50.360">
    <property type="match status" value="1"/>
</dbReference>
<dbReference type="Gene3D" id="3.60.15.10">
    <property type="entry name" value="Ribonuclease Z/Hydroxyacylglutathione hydrolase-like"/>
    <property type="match status" value="1"/>
</dbReference>
<dbReference type="HAMAP" id="MF_01312">
    <property type="entry name" value="NorV"/>
    <property type="match status" value="1"/>
</dbReference>
<dbReference type="InterPro" id="IPR023957">
    <property type="entry name" value="Anaer_NO_rdtase_flvorubredoxin"/>
</dbReference>
<dbReference type="InterPro" id="IPR008254">
    <property type="entry name" value="Flavodoxin/NO_synth"/>
</dbReference>
<dbReference type="InterPro" id="IPR029039">
    <property type="entry name" value="Flavoprotein-like_sf"/>
</dbReference>
<dbReference type="InterPro" id="IPR001279">
    <property type="entry name" value="Metallo-B-lactamas"/>
</dbReference>
<dbReference type="InterPro" id="IPR045761">
    <property type="entry name" value="ODP_dom"/>
</dbReference>
<dbReference type="InterPro" id="IPR036866">
    <property type="entry name" value="RibonucZ/Hydroxyglut_hydro"/>
</dbReference>
<dbReference type="InterPro" id="IPR024934">
    <property type="entry name" value="Rubredoxin-like_dom"/>
</dbReference>
<dbReference type="InterPro" id="IPR016440">
    <property type="entry name" value="Rubredoxin-O_OxRdtase"/>
</dbReference>
<dbReference type="InterPro" id="IPR024935">
    <property type="entry name" value="Rubredoxin_dom"/>
</dbReference>
<dbReference type="NCBIfam" id="NF003954">
    <property type="entry name" value="PRK05452.1"/>
    <property type="match status" value="1"/>
</dbReference>
<dbReference type="PANTHER" id="PTHR43717">
    <property type="entry name" value="ANAEROBIC NITRIC OXIDE REDUCTASE FLAVORUBREDOXIN"/>
    <property type="match status" value="1"/>
</dbReference>
<dbReference type="PANTHER" id="PTHR43717:SF1">
    <property type="entry name" value="ANAEROBIC NITRIC OXIDE REDUCTASE FLAVORUBREDOXIN"/>
    <property type="match status" value="1"/>
</dbReference>
<dbReference type="Pfam" id="PF00258">
    <property type="entry name" value="Flavodoxin_1"/>
    <property type="match status" value="1"/>
</dbReference>
<dbReference type="Pfam" id="PF19583">
    <property type="entry name" value="ODP"/>
    <property type="match status" value="1"/>
</dbReference>
<dbReference type="Pfam" id="PF00301">
    <property type="entry name" value="Rubredoxin"/>
    <property type="match status" value="1"/>
</dbReference>
<dbReference type="PIRSF" id="PIRSF005243">
    <property type="entry name" value="ROO"/>
    <property type="match status" value="1"/>
</dbReference>
<dbReference type="PRINTS" id="PR00163">
    <property type="entry name" value="RUBREDOXIN"/>
</dbReference>
<dbReference type="SMART" id="SM00849">
    <property type="entry name" value="Lactamase_B"/>
    <property type="match status" value="1"/>
</dbReference>
<dbReference type="SUPFAM" id="SSF52218">
    <property type="entry name" value="Flavoproteins"/>
    <property type="match status" value="1"/>
</dbReference>
<dbReference type="SUPFAM" id="SSF56281">
    <property type="entry name" value="Metallo-hydrolase/oxidoreductase"/>
    <property type="match status" value="1"/>
</dbReference>
<dbReference type="SUPFAM" id="SSF57802">
    <property type="entry name" value="Rubredoxin-like"/>
    <property type="match status" value="1"/>
</dbReference>
<dbReference type="PROSITE" id="PS50902">
    <property type="entry name" value="FLAVODOXIN_LIKE"/>
    <property type="match status" value="1"/>
</dbReference>
<dbReference type="PROSITE" id="PS50903">
    <property type="entry name" value="RUBREDOXIN_LIKE"/>
    <property type="match status" value="1"/>
</dbReference>
<evidence type="ECO:0000255" key="1">
    <source>
        <dbReference type="HAMAP-Rule" id="MF_01312"/>
    </source>
</evidence>
<name>NORV_ENT38</name>
<organism>
    <name type="scientific">Enterobacter sp. (strain 638)</name>
    <dbReference type="NCBI Taxonomy" id="399742"/>
    <lineage>
        <taxon>Bacteria</taxon>
        <taxon>Pseudomonadati</taxon>
        <taxon>Pseudomonadota</taxon>
        <taxon>Gammaproteobacteria</taxon>
        <taxon>Enterobacterales</taxon>
        <taxon>Enterobacteriaceae</taxon>
        <taxon>Enterobacter</taxon>
    </lineage>
</organism>
<proteinExistence type="inferred from homology"/>
<reference key="1">
    <citation type="journal article" date="2010" name="PLoS Genet.">
        <title>Genome sequence of the plant growth promoting endophytic bacterium Enterobacter sp. 638.</title>
        <authorList>
            <person name="Taghavi S."/>
            <person name="van der Lelie D."/>
            <person name="Hoffman A."/>
            <person name="Zhang Y.B."/>
            <person name="Walla M.D."/>
            <person name="Vangronsveld J."/>
            <person name="Newman L."/>
            <person name="Monchy S."/>
        </authorList>
    </citation>
    <scope>NUCLEOTIDE SEQUENCE [LARGE SCALE GENOMIC DNA]</scope>
    <source>
        <strain>638</strain>
    </source>
</reference>
<gene>
    <name evidence="1" type="primary">norV</name>
    <name evidence="1" type="synonym">flrD</name>
    <name type="ordered locus">Ent638_3182</name>
</gene>
<protein>
    <recommendedName>
        <fullName evidence="1">Anaerobic nitric oxide reductase flavorubredoxin</fullName>
        <shortName evidence="1">FlRd</shortName>
        <shortName evidence="1">FlavoRb</shortName>
    </recommendedName>
</protein>
<accession>A4WDR6</accession>
<keyword id="KW-0963">Cytoplasm</keyword>
<keyword id="KW-0249">Electron transport</keyword>
<keyword id="KW-0285">Flavoprotein</keyword>
<keyword id="KW-0288">FMN</keyword>
<keyword id="KW-0408">Iron</keyword>
<keyword id="KW-0479">Metal-binding</keyword>
<keyword id="KW-0560">Oxidoreductase</keyword>
<keyword id="KW-0813">Transport</keyword>
<feature type="chain" id="PRO_0000341307" description="Anaerobic nitric oxide reductase flavorubredoxin">
    <location>
        <begin position="1"/>
        <end position="482"/>
    </location>
</feature>
<feature type="domain" description="Flavodoxin-like" evidence="1">
    <location>
        <begin position="254"/>
        <end position="393"/>
    </location>
</feature>
<feature type="domain" description="Rubredoxin-like" evidence="1">
    <location>
        <begin position="426"/>
        <end position="477"/>
    </location>
</feature>
<feature type="region of interest" description="Zinc metallo-hydrolase">
    <location>
        <begin position="30"/>
        <end position="210"/>
    </location>
</feature>
<feature type="binding site" evidence="1">
    <location>
        <position position="79"/>
    </location>
    <ligand>
        <name>Fe cation</name>
        <dbReference type="ChEBI" id="CHEBI:24875"/>
        <label>1</label>
    </ligand>
</feature>
<feature type="binding site" evidence="1">
    <location>
        <position position="81"/>
    </location>
    <ligand>
        <name>Fe cation</name>
        <dbReference type="ChEBI" id="CHEBI:24875"/>
        <label>1</label>
    </ligand>
</feature>
<feature type="binding site" evidence="1">
    <location>
        <position position="83"/>
    </location>
    <ligand>
        <name>Fe cation</name>
        <dbReference type="ChEBI" id="CHEBI:24875"/>
        <label>2</label>
    </ligand>
</feature>
<feature type="binding site" evidence="1">
    <location>
        <position position="147"/>
    </location>
    <ligand>
        <name>Fe cation</name>
        <dbReference type="ChEBI" id="CHEBI:24875"/>
        <label>1</label>
    </ligand>
</feature>
<feature type="binding site" evidence="1">
    <location>
        <position position="166"/>
    </location>
    <ligand>
        <name>Fe cation</name>
        <dbReference type="ChEBI" id="CHEBI:24875"/>
        <label>1</label>
    </ligand>
</feature>
<feature type="binding site" evidence="1">
    <location>
        <position position="166"/>
    </location>
    <ligand>
        <name>Fe cation</name>
        <dbReference type="ChEBI" id="CHEBI:24875"/>
        <label>2</label>
    </ligand>
</feature>
<feature type="binding site" evidence="1">
    <location>
        <position position="227"/>
    </location>
    <ligand>
        <name>Fe cation</name>
        <dbReference type="ChEBI" id="CHEBI:24875"/>
        <label>2</label>
    </ligand>
</feature>
<feature type="binding site" evidence="1">
    <location>
        <begin position="260"/>
        <end position="264"/>
    </location>
    <ligand>
        <name>FMN</name>
        <dbReference type="ChEBI" id="CHEBI:58210"/>
    </ligand>
</feature>
<feature type="binding site" evidence="1">
    <location>
        <begin position="342"/>
        <end position="369"/>
    </location>
    <ligand>
        <name>FMN</name>
        <dbReference type="ChEBI" id="CHEBI:58210"/>
    </ligand>
</feature>
<feature type="binding site" evidence="1">
    <location>
        <position position="431"/>
    </location>
    <ligand>
        <name>Fe cation</name>
        <dbReference type="ChEBI" id="CHEBI:24875"/>
        <label>3</label>
    </ligand>
</feature>
<feature type="binding site" evidence="1">
    <location>
        <position position="434"/>
    </location>
    <ligand>
        <name>Fe cation</name>
        <dbReference type="ChEBI" id="CHEBI:24875"/>
        <label>3</label>
    </ligand>
</feature>
<feature type="binding site" evidence="1">
    <location>
        <position position="464"/>
    </location>
    <ligand>
        <name>Fe cation</name>
        <dbReference type="ChEBI" id="CHEBI:24875"/>
        <label>3</label>
    </ligand>
</feature>
<feature type="binding site" evidence="1">
    <location>
        <position position="467"/>
    </location>
    <ligand>
        <name>Fe cation</name>
        <dbReference type="ChEBI" id="CHEBI:24875"/>
        <label>3</label>
    </ligand>
</feature>
<comment type="function">
    <text evidence="1">Anaerobic nitric oxide reductase; uses NADH to detoxify nitric oxide (NO), protecting several 4Fe-4S NO-sensitive enzymes. Has at least 2 reductase partners, only one of which (NorW, flavorubredoxin reductase) has been identified. NO probably binds to the di-iron center; electrons enter from the NorW at rubredoxin and are transferred sequentially to the FMN center and the di-iron center. Also able to function as an aerobic oxygen reductase.</text>
</comment>
<comment type="cofactor">
    <cofactor evidence="1">
        <name>Fe cation</name>
        <dbReference type="ChEBI" id="CHEBI:24875"/>
    </cofactor>
    <text evidence="1">Binds 3 Fe cations per monomer.</text>
</comment>
<comment type="cofactor">
    <cofactor evidence="1">
        <name>FMN</name>
        <dbReference type="ChEBI" id="CHEBI:58210"/>
    </cofactor>
    <text evidence="1">Binds 1 FMN per monomer.</text>
</comment>
<comment type="pathway">
    <text evidence="1">Nitrogen metabolism; nitric oxide reduction.</text>
</comment>
<comment type="subunit">
    <text evidence="1">Homotetramer.</text>
</comment>
<comment type="subcellular location">
    <subcellularLocation>
        <location evidence="1">Cytoplasm</location>
    </subcellularLocation>
</comment>
<comment type="similarity">
    <text evidence="1">In the N-terminal section; belongs to the zinc metallo-hydrolase group 3 family.</text>
</comment>